<evidence type="ECO:0000250" key="1">
    <source>
        <dbReference type="UniProtKB" id="P32969"/>
    </source>
</evidence>
<evidence type="ECO:0000305" key="2"/>
<reference key="1">
    <citation type="journal article" date="1990" name="Gene">
        <title>The primary structure of rat ribosomal protein L9.</title>
        <authorList>
            <person name="Suzuki K."/>
            <person name="Olvera J."/>
            <person name="Wool I.G."/>
        </authorList>
    </citation>
    <scope>NUCLEOTIDE SEQUENCE [MRNA]</scope>
    <scope>PROTEIN SEQUENCE OF 1-45</scope>
    <source>
        <strain>Sprague-Dawley</strain>
        <tissue>Liver</tissue>
    </source>
</reference>
<reference key="2">
    <citation type="journal article" date="2004" name="Genome Res.">
        <title>The status, quality, and expansion of the NIH full-length cDNA project: the Mammalian Gene Collection (MGC).</title>
        <authorList>
            <consortium name="The MGC Project Team"/>
        </authorList>
    </citation>
    <scope>NUCLEOTIDE SEQUENCE [LARGE SCALE MRNA]</scope>
    <source>
        <tissue>Ovary</tissue>
    </source>
</reference>
<gene>
    <name type="primary">Rpl9</name>
</gene>
<name>RL9_RAT</name>
<proteinExistence type="evidence at protein level"/>
<sequence length="192" mass="21893">MKTILSNQTVDIPENVDITLKGRTVIVKGPRGTLRRDFNHINVELSLLGKKKKRLRVDKWWGNRKELATVRTICSHVQNMIKGVTLGFRYKMRSVYAHFPINVVIQENGSLVEIRNFLGEKYIRRVRMRTGVACSVSQAQKDELILEGNDIELVSNSAALIQQATTVKNKDIRKFLDGIYVSEKGTVQQPDE</sequence>
<keyword id="KW-0002">3D-structure</keyword>
<keyword id="KW-0007">Acetylation</keyword>
<keyword id="KW-0963">Cytoplasm</keyword>
<keyword id="KW-0903">Direct protein sequencing</keyword>
<keyword id="KW-1185">Reference proteome</keyword>
<keyword id="KW-0687">Ribonucleoprotein</keyword>
<keyword id="KW-0689">Ribosomal protein</keyword>
<comment type="function">
    <text evidence="1">Component of the large ribosomal subunit. The ribosome is a large ribonucleoprotein complex responsible for the synthesis of proteins in the cell.</text>
</comment>
<comment type="subunit">
    <text evidence="1">Component of the large ribosomal subunit.</text>
</comment>
<comment type="subcellular location">
    <subcellularLocation>
        <location evidence="1">Cytoplasm</location>
    </subcellularLocation>
</comment>
<comment type="similarity">
    <text evidence="2">Belongs to the universal ribosomal protein uL6 family.</text>
</comment>
<organism>
    <name type="scientific">Rattus norvegicus</name>
    <name type="common">Rat</name>
    <dbReference type="NCBI Taxonomy" id="10116"/>
    <lineage>
        <taxon>Eukaryota</taxon>
        <taxon>Metazoa</taxon>
        <taxon>Chordata</taxon>
        <taxon>Craniata</taxon>
        <taxon>Vertebrata</taxon>
        <taxon>Euteleostomi</taxon>
        <taxon>Mammalia</taxon>
        <taxon>Eutheria</taxon>
        <taxon>Euarchontoglires</taxon>
        <taxon>Glires</taxon>
        <taxon>Rodentia</taxon>
        <taxon>Myomorpha</taxon>
        <taxon>Muroidea</taxon>
        <taxon>Muridae</taxon>
        <taxon>Murinae</taxon>
        <taxon>Rattus</taxon>
    </lineage>
</organism>
<accession>P17077</accession>
<feature type="chain" id="PRO_0000131100" description="Large ribosomal subunit protein uL6">
    <location>
        <begin position="1"/>
        <end position="192"/>
    </location>
</feature>
<feature type="modified residue" description="N6-acetyllysine" evidence="1">
    <location>
        <position position="121"/>
    </location>
</feature>
<dbReference type="EMBL" id="X51706">
    <property type="protein sequence ID" value="CAA36002.1"/>
    <property type="molecule type" value="mRNA"/>
</dbReference>
<dbReference type="EMBL" id="BC086561">
    <property type="protein sequence ID" value="AAH86561.1"/>
    <property type="molecule type" value="mRNA"/>
</dbReference>
<dbReference type="PIR" id="JH0222">
    <property type="entry name" value="R5RT9"/>
</dbReference>
<dbReference type="RefSeq" id="NP_001007599.3">
    <property type="nucleotide sequence ID" value="NM_001007598.3"/>
</dbReference>
<dbReference type="RefSeq" id="XP_002725578.1">
    <property type="nucleotide sequence ID" value="XM_002725532.5"/>
</dbReference>
<dbReference type="RefSeq" id="XP_002729193.1">
    <property type="nucleotide sequence ID" value="XM_002729147.2"/>
</dbReference>
<dbReference type="RefSeq" id="XP_003748822.1">
    <property type="nucleotide sequence ID" value="XM_003748774.4"/>
</dbReference>
<dbReference type="RefSeq" id="XP_003753735.1">
    <property type="nucleotide sequence ID" value="XM_003753687.1"/>
</dbReference>
<dbReference type="RefSeq" id="XP_063129060.1">
    <property type="nucleotide sequence ID" value="XM_063272990.1"/>
</dbReference>
<dbReference type="PDB" id="7QGG">
    <property type="method" value="EM"/>
    <property type="resolution" value="2.86 A"/>
    <property type="chains" value="J=1-192"/>
</dbReference>
<dbReference type="PDBsum" id="7QGG"/>
<dbReference type="EMDB" id="EMD-13954"/>
<dbReference type="SMR" id="P17077"/>
<dbReference type="BioGRID" id="247930">
    <property type="interactions" value="3"/>
</dbReference>
<dbReference type="FunCoup" id="P17077">
    <property type="interactions" value="2410"/>
</dbReference>
<dbReference type="IntAct" id="P17077">
    <property type="interactions" value="3"/>
</dbReference>
<dbReference type="STRING" id="10116.ENSRNOP00000041817"/>
<dbReference type="iPTMnet" id="P17077"/>
<dbReference type="PhosphoSitePlus" id="P17077"/>
<dbReference type="jPOST" id="P17077"/>
<dbReference type="PaxDb" id="10116-ENSRNOP00000032635"/>
<dbReference type="Ensembl" id="ENSRNOT00000038927.6">
    <property type="protein sequence ID" value="ENSRNOP00000032635.3"/>
    <property type="gene ID" value="ENSRNOG00000026716.6"/>
</dbReference>
<dbReference type="Ensembl" id="ENSRNOT00000042201.6">
    <property type="protein sequence ID" value="ENSRNOP00000041817.3"/>
    <property type="gene ID" value="ENSRNOG00000030476.6"/>
</dbReference>
<dbReference type="Ensembl" id="ENSRNOT00000052231.5">
    <property type="protein sequence ID" value="ENSRNOP00000069650.1"/>
    <property type="gene ID" value="ENSRNOG00000028449.5"/>
</dbReference>
<dbReference type="GeneID" id="29257"/>
<dbReference type="KEGG" id="rno:29257"/>
<dbReference type="UCSC" id="RGD:62049">
    <property type="organism name" value="rat"/>
</dbReference>
<dbReference type="AGR" id="RGD:62049"/>
<dbReference type="CTD" id="6133"/>
<dbReference type="RGD" id="62049">
    <property type="gene designation" value="Rpl9"/>
</dbReference>
<dbReference type="eggNOG" id="KOG3255">
    <property type="taxonomic scope" value="Eukaryota"/>
</dbReference>
<dbReference type="GeneTree" id="ENSGT00390000015224"/>
<dbReference type="HOGENOM" id="CLU_065464_0_2_1"/>
<dbReference type="InParanoid" id="P17077"/>
<dbReference type="OMA" id="IVRTIKC"/>
<dbReference type="OrthoDB" id="10252633at2759"/>
<dbReference type="PhylomeDB" id="P17077"/>
<dbReference type="TreeFam" id="TF300033"/>
<dbReference type="Reactome" id="R-RNO-156827">
    <property type="pathway name" value="L13a-mediated translational silencing of Ceruloplasmin expression"/>
</dbReference>
<dbReference type="Reactome" id="R-RNO-1799339">
    <property type="pathway name" value="SRP-dependent cotranslational protein targeting to membrane"/>
</dbReference>
<dbReference type="Reactome" id="R-RNO-6791226">
    <property type="pathway name" value="Major pathway of rRNA processing in the nucleolus and cytosol"/>
</dbReference>
<dbReference type="Reactome" id="R-RNO-72689">
    <property type="pathway name" value="Formation of a pool of free 40S subunits"/>
</dbReference>
<dbReference type="Reactome" id="R-RNO-72706">
    <property type="pathway name" value="GTP hydrolysis and joining of the 60S ribosomal subunit"/>
</dbReference>
<dbReference type="Reactome" id="R-RNO-975956">
    <property type="pathway name" value="Nonsense Mediated Decay (NMD) independent of the Exon Junction Complex (EJC)"/>
</dbReference>
<dbReference type="Reactome" id="R-RNO-975957">
    <property type="pathway name" value="Nonsense Mediated Decay (NMD) enhanced by the Exon Junction Complex (EJC)"/>
</dbReference>
<dbReference type="PRO" id="PR:P17077"/>
<dbReference type="Proteomes" id="UP000002494">
    <property type="component" value="Chromosome 1"/>
</dbReference>
<dbReference type="Proteomes" id="UP000002494">
    <property type="component" value="Chromosome 14"/>
</dbReference>
<dbReference type="Proteomes" id="UP000002494">
    <property type="component" value="Chromosome 3"/>
</dbReference>
<dbReference type="Bgee" id="ENSRNOG00000026716">
    <property type="expression patterns" value="Expressed in ovary and 19 other cell types or tissues"/>
</dbReference>
<dbReference type="GO" id="GO:0005737">
    <property type="term" value="C:cytoplasm"/>
    <property type="evidence" value="ECO:0000266"/>
    <property type="project" value="RGD"/>
</dbReference>
<dbReference type="GO" id="GO:0022625">
    <property type="term" value="C:cytosolic large ribosomal subunit"/>
    <property type="evidence" value="ECO:0000314"/>
    <property type="project" value="RGD"/>
</dbReference>
<dbReference type="GO" id="GO:0022626">
    <property type="term" value="C:cytosolic ribosome"/>
    <property type="evidence" value="ECO:0000266"/>
    <property type="project" value="RGD"/>
</dbReference>
<dbReference type="GO" id="GO:0045202">
    <property type="term" value="C:synapse"/>
    <property type="evidence" value="ECO:0000266"/>
    <property type="project" value="RGD"/>
</dbReference>
<dbReference type="GO" id="GO:0019843">
    <property type="term" value="F:rRNA binding"/>
    <property type="evidence" value="ECO:0007669"/>
    <property type="project" value="InterPro"/>
</dbReference>
<dbReference type="GO" id="GO:0003735">
    <property type="term" value="F:structural constituent of ribosome"/>
    <property type="evidence" value="ECO:0000266"/>
    <property type="project" value="RGD"/>
</dbReference>
<dbReference type="GO" id="GO:1990090">
    <property type="term" value="P:cellular response to nerve growth factor stimulus"/>
    <property type="evidence" value="ECO:0000270"/>
    <property type="project" value="RGD"/>
</dbReference>
<dbReference type="GO" id="GO:0002181">
    <property type="term" value="P:cytoplasmic translation"/>
    <property type="evidence" value="ECO:0000318"/>
    <property type="project" value="GO_Central"/>
</dbReference>
<dbReference type="FunFam" id="3.90.930.12:FF:000003">
    <property type="entry name" value="60S ribosomal protein L9"/>
    <property type="match status" value="1"/>
</dbReference>
<dbReference type="FunFam" id="3.90.930.12:FF:000005">
    <property type="entry name" value="60S ribosomal protein L9"/>
    <property type="match status" value="1"/>
</dbReference>
<dbReference type="Gene3D" id="3.90.930.12">
    <property type="entry name" value="Ribosomal protein L6, alpha-beta domain"/>
    <property type="match status" value="2"/>
</dbReference>
<dbReference type="InterPro" id="IPR000702">
    <property type="entry name" value="Ribosomal_uL6-like"/>
</dbReference>
<dbReference type="InterPro" id="IPR036789">
    <property type="entry name" value="Ribosomal_uL6-like_a/b-dom_sf"/>
</dbReference>
<dbReference type="InterPro" id="IPR020040">
    <property type="entry name" value="Ribosomal_uL6_a/b-dom"/>
</dbReference>
<dbReference type="InterPro" id="IPR002359">
    <property type="entry name" value="Ribosomal_uL6_CS2"/>
</dbReference>
<dbReference type="PANTHER" id="PTHR11655">
    <property type="entry name" value="60S/50S RIBOSOMAL PROTEIN L6/L9"/>
    <property type="match status" value="1"/>
</dbReference>
<dbReference type="PANTHER" id="PTHR11655:SF46">
    <property type="entry name" value="LARGE RIBOSOMAL SUBUNIT PROTEIN UL6"/>
    <property type="match status" value="1"/>
</dbReference>
<dbReference type="Pfam" id="PF00347">
    <property type="entry name" value="Ribosomal_L6"/>
    <property type="match status" value="2"/>
</dbReference>
<dbReference type="PIRSF" id="PIRSF002162">
    <property type="entry name" value="Ribosomal_L6"/>
    <property type="match status" value="1"/>
</dbReference>
<dbReference type="SUPFAM" id="SSF56053">
    <property type="entry name" value="Ribosomal protein L6"/>
    <property type="match status" value="2"/>
</dbReference>
<dbReference type="PROSITE" id="PS00700">
    <property type="entry name" value="RIBOSOMAL_L6_2"/>
    <property type="match status" value="1"/>
</dbReference>
<protein>
    <recommendedName>
        <fullName evidence="2">Large ribosomal subunit protein uL6</fullName>
    </recommendedName>
    <alternativeName>
        <fullName>60S ribosomal protein L9</fullName>
    </alternativeName>
</protein>